<dbReference type="EMBL" id="AB008268">
    <property type="protein sequence ID" value="BAB09857.1"/>
    <property type="molecule type" value="Genomic_DNA"/>
</dbReference>
<dbReference type="EMBL" id="CP002688">
    <property type="protein sequence ID" value="AED97863.1"/>
    <property type="molecule type" value="Genomic_DNA"/>
</dbReference>
<dbReference type="EMBL" id="AF326891">
    <property type="protein sequence ID" value="AAG41473.1"/>
    <property type="molecule type" value="mRNA"/>
</dbReference>
<dbReference type="EMBL" id="AF339708">
    <property type="protein sequence ID" value="AAK00390.1"/>
    <property type="molecule type" value="mRNA"/>
</dbReference>
<dbReference type="EMBL" id="AF380638">
    <property type="protein sequence ID" value="AAK55719.1"/>
    <property type="molecule type" value="mRNA"/>
</dbReference>
<dbReference type="EMBL" id="AY057739">
    <property type="protein sequence ID" value="AAL15369.1"/>
    <property type="molecule type" value="mRNA"/>
</dbReference>
<dbReference type="EMBL" id="AY087652">
    <property type="protein sequence ID" value="AAM65190.1"/>
    <property type="molecule type" value="mRNA"/>
</dbReference>
<dbReference type="RefSeq" id="NP_201231.1">
    <property type="nucleotide sequence ID" value="NM_125822.3"/>
</dbReference>
<dbReference type="BioGRID" id="21789">
    <property type="interactions" value="5"/>
</dbReference>
<dbReference type="FunCoup" id="Q9FE06">
    <property type="interactions" value="99"/>
</dbReference>
<dbReference type="IntAct" id="Q9FE06">
    <property type="interactions" value="4"/>
</dbReference>
<dbReference type="STRING" id="3702.Q9FE06"/>
<dbReference type="GlyCosmos" id="Q9FE06">
    <property type="glycosylation" value="1 site, No reported glycans"/>
</dbReference>
<dbReference type="GlyGen" id="Q9FE06">
    <property type="glycosylation" value="1 site"/>
</dbReference>
<dbReference type="PaxDb" id="3702-AT5G64260.1"/>
<dbReference type="ProteomicsDB" id="221815"/>
<dbReference type="EnsemblPlants" id="AT5G64260.1">
    <property type="protein sequence ID" value="AT5G64260.1"/>
    <property type="gene ID" value="AT5G64260"/>
</dbReference>
<dbReference type="GeneID" id="836547"/>
<dbReference type="Gramene" id="AT5G64260.1">
    <property type="protein sequence ID" value="AT5G64260.1"/>
    <property type="gene ID" value="AT5G64260"/>
</dbReference>
<dbReference type="KEGG" id="ath:AT5G64260"/>
<dbReference type="Araport" id="AT5G64260"/>
<dbReference type="TAIR" id="AT5G64260">
    <property type="gene designation" value="EXL2"/>
</dbReference>
<dbReference type="eggNOG" id="KOG0017">
    <property type="taxonomic scope" value="Eukaryota"/>
</dbReference>
<dbReference type="HOGENOM" id="CLU_053777_1_0_1"/>
<dbReference type="InParanoid" id="Q9FE06"/>
<dbReference type="OMA" id="QILHPAY"/>
<dbReference type="OrthoDB" id="2017091at2759"/>
<dbReference type="PhylomeDB" id="Q9FE06"/>
<dbReference type="CD-CODE" id="4299E36E">
    <property type="entry name" value="Nucleolus"/>
</dbReference>
<dbReference type="PRO" id="PR:Q9FE06"/>
<dbReference type="Proteomes" id="UP000006548">
    <property type="component" value="Chromosome 5"/>
</dbReference>
<dbReference type="ExpressionAtlas" id="Q9FE06">
    <property type="expression patterns" value="baseline and differential"/>
</dbReference>
<dbReference type="GO" id="GO:0048046">
    <property type="term" value="C:apoplast"/>
    <property type="evidence" value="ECO:0007669"/>
    <property type="project" value="UniProtKB-SubCell"/>
</dbReference>
<dbReference type="GO" id="GO:0005794">
    <property type="term" value="C:Golgi apparatus"/>
    <property type="evidence" value="ECO:0007005"/>
    <property type="project" value="TAIR"/>
</dbReference>
<dbReference type="GO" id="GO:0009505">
    <property type="term" value="C:plant-type cell wall"/>
    <property type="evidence" value="ECO:0007005"/>
    <property type="project" value="TAIR"/>
</dbReference>
<dbReference type="GO" id="GO:0009506">
    <property type="term" value="C:plasmodesma"/>
    <property type="evidence" value="ECO:0007005"/>
    <property type="project" value="TAIR"/>
</dbReference>
<dbReference type="GO" id="GO:0009536">
    <property type="term" value="C:plastid"/>
    <property type="evidence" value="ECO:0007005"/>
    <property type="project" value="TAIR"/>
</dbReference>
<dbReference type="GO" id="GO:0071456">
    <property type="term" value="P:cellular response to hypoxia"/>
    <property type="evidence" value="ECO:0007007"/>
    <property type="project" value="TAIR"/>
</dbReference>
<dbReference type="InterPro" id="IPR006766">
    <property type="entry name" value="EXORDIUM-like"/>
</dbReference>
<dbReference type="PANTHER" id="PTHR31279:SF3">
    <property type="entry name" value="PROTEIN EXORDIUM-LIKE 2"/>
    <property type="match status" value="1"/>
</dbReference>
<dbReference type="PANTHER" id="PTHR31279">
    <property type="entry name" value="PROTEIN EXORDIUM-LIKE 5"/>
    <property type="match status" value="1"/>
</dbReference>
<dbReference type="Pfam" id="PF04674">
    <property type="entry name" value="Phi_1"/>
    <property type="match status" value="1"/>
</dbReference>
<comment type="function">
    <text evidence="1">May play a role in a brassinosteroid-dependent regulation of growth and development.</text>
</comment>
<comment type="subcellular location">
    <subcellularLocation>
        <location>Secreted</location>
    </subcellularLocation>
    <subcellularLocation>
        <location>Secreted</location>
        <location>Extracellular space</location>
    </subcellularLocation>
    <subcellularLocation>
        <location evidence="3">Secreted</location>
        <location evidence="3">Extracellular space</location>
        <location evidence="3">Apoplast</location>
    </subcellularLocation>
</comment>
<comment type="similarity">
    <text evidence="3">Belongs to the EXORDIUM family.</text>
</comment>
<accession>Q9FE06</accession>
<feature type="signal peptide" evidence="2">
    <location>
        <begin position="1"/>
        <end position="23"/>
    </location>
</feature>
<feature type="chain" id="PRO_0000430282" description="Protein EXORDIUM-like 2">
    <location>
        <begin position="24"/>
        <end position="305"/>
    </location>
</feature>
<feature type="glycosylation site" description="N-linked (GlcNAc...) asparagine" evidence="2">
    <location>
        <position position="44"/>
    </location>
</feature>
<sequence length="305" mass="32674">MASNYRFAIFLTLFFATAGFSAAALVEEQPLVMKYHNGVLLKGNITVNLVWYGKFTPIQRSVIVDFIHSLNSKDVASSAAVPSVASWWKTTEKYKGGSSTLVVGKQLLLENYPLGKSLKNPYLRALSTKLNGGLRSITVVLTAKDVTVERFCMSRCGTHGSSGSNPRRAANGAAYVWVGNSETQCPGYCAWPFHQPIYGPQTPPLVAPNGDVGVDGMIINLATLLANTVTNPFNNGYYQGPPTAPLEAVSACPGIFGSGSYPGYAGRVLVDKTTGSSYNARGLAGRKYLLPAMWDPQSSTCKTLV</sequence>
<proteinExistence type="evidence at transcript level"/>
<name>EXOL2_ARATH</name>
<organism>
    <name type="scientific">Arabidopsis thaliana</name>
    <name type="common">Mouse-ear cress</name>
    <dbReference type="NCBI Taxonomy" id="3702"/>
    <lineage>
        <taxon>Eukaryota</taxon>
        <taxon>Viridiplantae</taxon>
        <taxon>Streptophyta</taxon>
        <taxon>Embryophyta</taxon>
        <taxon>Tracheophyta</taxon>
        <taxon>Spermatophyta</taxon>
        <taxon>Magnoliopsida</taxon>
        <taxon>eudicotyledons</taxon>
        <taxon>Gunneridae</taxon>
        <taxon>Pentapetalae</taxon>
        <taxon>rosids</taxon>
        <taxon>malvids</taxon>
        <taxon>Brassicales</taxon>
        <taxon>Brassicaceae</taxon>
        <taxon>Camelineae</taxon>
        <taxon>Arabidopsis</taxon>
    </lineage>
</organism>
<protein>
    <recommendedName>
        <fullName>Protein EXORDIUM-like 2</fullName>
    </recommendedName>
</protein>
<gene>
    <name type="primary">EXL2</name>
    <name type="ordered locus">At5g64260</name>
    <name type="ORF">MSJ1.10</name>
</gene>
<evidence type="ECO:0000250" key="1"/>
<evidence type="ECO:0000255" key="2"/>
<evidence type="ECO:0000305" key="3"/>
<reference key="1">
    <citation type="journal article" date="1997" name="DNA Res.">
        <title>Structural analysis of Arabidopsis thaliana chromosome 5. III. Sequence features of the regions of 1,191,918 bp covered by seventeen physically assigned P1 clones.</title>
        <authorList>
            <person name="Nakamura Y."/>
            <person name="Sato S."/>
            <person name="Kaneko T."/>
            <person name="Kotani H."/>
            <person name="Asamizu E."/>
            <person name="Miyajima N."/>
            <person name="Tabata S."/>
        </authorList>
    </citation>
    <scope>NUCLEOTIDE SEQUENCE [LARGE SCALE GENOMIC DNA]</scope>
    <source>
        <strain>cv. Columbia</strain>
    </source>
</reference>
<reference key="2">
    <citation type="journal article" date="2017" name="Plant J.">
        <title>Araport11: a complete reannotation of the Arabidopsis thaliana reference genome.</title>
        <authorList>
            <person name="Cheng C.Y."/>
            <person name="Krishnakumar V."/>
            <person name="Chan A.P."/>
            <person name="Thibaud-Nissen F."/>
            <person name="Schobel S."/>
            <person name="Town C.D."/>
        </authorList>
    </citation>
    <scope>GENOME REANNOTATION</scope>
    <source>
        <strain>cv. Columbia</strain>
    </source>
</reference>
<reference key="3">
    <citation type="journal article" date="2003" name="Science">
        <title>Empirical analysis of transcriptional activity in the Arabidopsis genome.</title>
        <authorList>
            <person name="Yamada K."/>
            <person name="Lim J."/>
            <person name="Dale J.M."/>
            <person name="Chen H."/>
            <person name="Shinn P."/>
            <person name="Palm C.J."/>
            <person name="Southwick A.M."/>
            <person name="Wu H.C."/>
            <person name="Kim C.J."/>
            <person name="Nguyen M."/>
            <person name="Pham P.K."/>
            <person name="Cheuk R.F."/>
            <person name="Karlin-Newmann G."/>
            <person name="Liu S.X."/>
            <person name="Lam B."/>
            <person name="Sakano H."/>
            <person name="Wu T."/>
            <person name="Yu G."/>
            <person name="Miranda M."/>
            <person name="Quach H.L."/>
            <person name="Tripp M."/>
            <person name="Chang C.H."/>
            <person name="Lee J.M."/>
            <person name="Toriumi M.J."/>
            <person name="Chan M.M."/>
            <person name="Tang C.C."/>
            <person name="Onodera C.S."/>
            <person name="Deng J.M."/>
            <person name="Akiyama K."/>
            <person name="Ansari Y."/>
            <person name="Arakawa T."/>
            <person name="Banh J."/>
            <person name="Banno F."/>
            <person name="Bowser L."/>
            <person name="Brooks S.Y."/>
            <person name="Carninci P."/>
            <person name="Chao Q."/>
            <person name="Choy N."/>
            <person name="Enju A."/>
            <person name="Goldsmith A.D."/>
            <person name="Gurjal M."/>
            <person name="Hansen N.F."/>
            <person name="Hayashizaki Y."/>
            <person name="Johnson-Hopson C."/>
            <person name="Hsuan V.W."/>
            <person name="Iida K."/>
            <person name="Karnes M."/>
            <person name="Khan S."/>
            <person name="Koesema E."/>
            <person name="Ishida J."/>
            <person name="Jiang P.X."/>
            <person name="Jones T."/>
            <person name="Kawai J."/>
            <person name="Kamiya A."/>
            <person name="Meyers C."/>
            <person name="Nakajima M."/>
            <person name="Narusaka M."/>
            <person name="Seki M."/>
            <person name="Sakurai T."/>
            <person name="Satou M."/>
            <person name="Tamse R."/>
            <person name="Vaysberg M."/>
            <person name="Wallender E.K."/>
            <person name="Wong C."/>
            <person name="Yamamura Y."/>
            <person name="Yuan S."/>
            <person name="Shinozaki K."/>
            <person name="Davis R.W."/>
            <person name="Theologis A."/>
            <person name="Ecker J.R."/>
        </authorList>
    </citation>
    <scope>NUCLEOTIDE SEQUENCE [LARGE SCALE MRNA]</scope>
    <source>
        <strain>cv. Columbia</strain>
    </source>
</reference>
<reference key="4">
    <citation type="submission" date="2002-03" db="EMBL/GenBank/DDBJ databases">
        <title>Full-length cDNA from Arabidopsis thaliana.</title>
        <authorList>
            <person name="Brover V.V."/>
            <person name="Troukhan M.E."/>
            <person name="Alexandrov N.A."/>
            <person name="Lu Y.-P."/>
            <person name="Flavell R.B."/>
            <person name="Feldmann K.A."/>
        </authorList>
    </citation>
    <scope>NUCLEOTIDE SEQUENCE [LARGE SCALE MRNA]</scope>
</reference>
<reference key="5">
    <citation type="journal article" date="2009" name="BMC Plant Biol.">
        <title>The extracellular EXO protein mediates cell expansion in Arabidopsis leaves.</title>
        <authorList>
            <person name="Schroder F."/>
            <person name="Lisso J."/>
            <person name="Lange P."/>
            <person name="Mussig C."/>
        </authorList>
    </citation>
    <scope>GENE FAMILY</scope>
    <scope>NOMENCLATURE</scope>
</reference>
<keyword id="KW-0052">Apoplast</keyword>
<keyword id="KW-0325">Glycoprotein</keyword>
<keyword id="KW-1185">Reference proteome</keyword>
<keyword id="KW-0964">Secreted</keyword>
<keyword id="KW-0732">Signal</keyword>